<proteinExistence type="inferred from homology"/>
<reference key="1">
    <citation type="journal article" date="2007" name="PLoS ONE">
        <title>Analysis of the neurotoxin complex genes in Clostridium botulinum A1-A4 and B1 strains: BoNT/A3, /Ba4 and /B1 clusters are located within plasmids.</title>
        <authorList>
            <person name="Smith T.J."/>
            <person name="Hill K.K."/>
            <person name="Foley B.T."/>
            <person name="Detter J.C."/>
            <person name="Munk A.C."/>
            <person name="Bruce D.C."/>
            <person name="Doggett N.A."/>
            <person name="Smith L.A."/>
            <person name="Marks J.D."/>
            <person name="Xie G."/>
            <person name="Brettin T.S."/>
        </authorList>
    </citation>
    <scope>NUCLEOTIDE SEQUENCE [LARGE SCALE GENOMIC DNA]</scope>
    <source>
        <strain>Loch Maree / Type A3</strain>
    </source>
</reference>
<evidence type="ECO:0000255" key="1">
    <source>
        <dbReference type="HAMAP-Rule" id="MF_00358"/>
    </source>
</evidence>
<evidence type="ECO:0000256" key="2">
    <source>
        <dbReference type="SAM" id="MobiDB-lite"/>
    </source>
</evidence>
<evidence type="ECO:0000305" key="3"/>
<accession>B1KZN1</accession>
<organism>
    <name type="scientific">Clostridium botulinum (strain Loch Maree / Type A3)</name>
    <dbReference type="NCBI Taxonomy" id="498214"/>
    <lineage>
        <taxon>Bacteria</taxon>
        <taxon>Bacillati</taxon>
        <taxon>Bacillota</taxon>
        <taxon>Clostridia</taxon>
        <taxon>Eubacteriales</taxon>
        <taxon>Clostridiaceae</taxon>
        <taxon>Clostridium</taxon>
    </lineage>
</organism>
<gene>
    <name evidence="1" type="primary">rpsU</name>
    <name type="ordered locus">CLK_2338</name>
</gene>
<sequence>MSEIKVGENESLENALRRFKKKCARAGVLSEVRKREHYEKPSVKKKKKSEAARKRKFK</sequence>
<name>RS21_CLOBM</name>
<dbReference type="EMBL" id="CP000962">
    <property type="protein sequence ID" value="ACA55751.1"/>
    <property type="molecule type" value="Genomic_DNA"/>
</dbReference>
<dbReference type="RefSeq" id="WP_003357777.1">
    <property type="nucleotide sequence ID" value="NC_010520.1"/>
</dbReference>
<dbReference type="SMR" id="B1KZN1"/>
<dbReference type="GeneID" id="92939674"/>
<dbReference type="KEGG" id="cbl:CLK_2338"/>
<dbReference type="HOGENOM" id="CLU_159258_1_2_9"/>
<dbReference type="GO" id="GO:1990904">
    <property type="term" value="C:ribonucleoprotein complex"/>
    <property type="evidence" value="ECO:0007669"/>
    <property type="project" value="UniProtKB-KW"/>
</dbReference>
<dbReference type="GO" id="GO:0005840">
    <property type="term" value="C:ribosome"/>
    <property type="evidence" value="ECO:0007669"/>
    <property type="project" value="UniProtKB-KW"/>
</dbReference>
<dbReference type="GO" id="GO:0003735">
    <property type="term" value="F:structural constituent of ribosome"/>
    <property type="evidence" value="ECO:0007669"/>
    <property type="project" value="InterPro"/>
</dbReference>
<dbReference type="GO" id="GO:0006412">
    <property type="term" value="P:translation"/>
    <property type="evidence" value="ECO:0007669"/>
    <property type="project" value="UniProtKB-UniRule"/>
</dbReference>
<dbReference type="Gene3D" id="1.20.5.1150">
    <property type="entry name" value="Ribosomal protein S8"/>
    <property type="match status" value="1"/>
</dbReference>
<dbReference type="HAMAP" id="MF_00358">
    <property type="entry name" value="Ribosomal_bS21"/>
    <property type="match status" value="1"/>
</dbReference>
<dbReference type="InterPro" id="IPR001911">
    <property type="entry name" value="Ribosomal_bS21"/>
</dbReference>
<dbReference type="InterPro" id="IPR018278">
    <property type="entry name" value="Ribosomal_bS21_CS"/>
</dbReference>
<dbReference type="InterPro" id="IPR038380">
    <property type="entry name" value="Ribosomal_bS21_sf"/>
</dbReference>
<dbReference type="NCBIfam" id="TIGR00030">
    <property type="entry name" value="S21p"/>
    <property type="match status" value="1"/>
</dbReference>
<dbReference type="PANTHER" id="PTHR21109">
    <property type="entry name" value="MITOCHONDRIAL 28S RIBOSOMAL PROTEIN S21"/>
    <property type="match status" value="1"/>
</dbReference>
<dbReference type="PANTHER" id="PTHR21109:SF22">
    <property type="entry name" value="SMALL RIBOSOMAL SUBUNIT PROTEIN BS21"/>
    <property type="match status" value="1"/>
</dbReference>
<dbReference type="Pfam" id="PF01165">
    <property type="entry name" value="Ribosomal_S21"/>
    <property type="match status" value="1"/>
</dbReference>
<dbReference type="PRINTS" id="PR00976">
    <property type="entry name" value="RIBOSOMALS21"/>
</dbReference>
<dbReference type="PROSITE" id="PS01181">
    <property type="entry name" value="RIBOSOMAL_S21"/>
    <property type="match status" value="1"/>
</dbReference>
<protein>
    <recommendedName>
        <fullName evidence="1">Small ribosomal subunit protein bS21</fullName>
    </recommendedName>
    <alternativeName>
        <fullName evidence="3">30S ribosomal protein S21</fullName>
    </alternativeName>
</protein>
<comment type="similarity">
    <text evidence="1">Belongs to the bacterial ribosomal protein bS21 family.</text>
</comment>
<keyword id="KW-0687">Ribonucleoprotein</keyword>
<keyword id="KW-0689">Ribosomal protein</keyword>
<feature type="chain" id="PRO_1000120605" description="Small ribosomal subunit protein bS21">
    <location>
        <begin position="1"/>
        <end position="58"/>
    </location>
</feature>
<feature type="region of interest" description="Disordered" evidence="2">
    <location>
        <begin position="32"/>
        <end position="58"/>
    </location>
</feature>
<feature type="compositionally biased region" description="Basic and acidic residues" evidence="2">
    <location>
        <begin position="32"/>
        <end position="42"/>
    </location>
</feature>
<feature type="compositionally biased region" description="Basic residues" evidence="2">
    <location>
        <begin position="43"/>
        <end position="58"/>
    </location>
</feature>